<protein>
    <recommendedName>
        <fullName evidence="1">Large ribosomal subunit protein bL32c</fullName>
    </recommendedName>
    <alternativeName>
        <fullName evidence="3">50S ribosomal protein L32, chloroplastic</fullName>
    </alternativeName>
</protein>
<geneLocation type="chloroplast"/>
<sequence>MAVPKKRTSKSKKNARKANWKRKGYKAAQKSLSLAKSMLKGKTTSFVYSIYVDDE</sequence>
<accession>A0T0G1</accession>
<dbReference type="EMBL" id="EF067920">
    <property type="protein sequence ID" value="ABK20659.1"/>
    <property type="molecule type" value="Genomic_DNA"/>
</dbReference>
<dbReference type="RefSeq" id="YP_874436.1">
    <property type="nucleotide sequence ID" value="NC_008588.1"/>
</dbReference>
<dbReference type="SMR" id="A0T0G1"/>
<dbReference type="STRING" id="556484.A0T0G1"/>
<dbReference type="GeneID" id="4524558"/>
<dbReference type="InParanoid" id="A0T0G1"/>
<dbReference type="Proteomes" id="UP000000759">
    <property type="component" value="Chloroplast"/>
</dbReference>
<dbReference type="GO" id="GO:0009507">
    <property type="term" value="C:chloroplast"/>
    <property type="evidence" value="ECO:0007669"/>
    <property type="project" value="UniProtKB-SubCell"/>
</dbReference>
<dbReference type="GO" id="GO:0015934">
    <property type="term" value="C:large ribosomal subunit"/>
    <property type="evidence" value="ECO:0007669"/>
    <property type="project" value="InterPro"/>
</dbReference>
<dbReference type="GO" id="GO:0003735">
    <property type="term" value="F:structural constituent of ribosome"/>
    <property type="evidence" value="ECO:0007669"/>
    <property type="project" value="InterPro"/>
</dbReference>
<dbReference type="GO" id="GO:0006412">
    <property type="term" value="P:translation"/>
    <property type="evidence" value="ECO:0007669"/>
    <property type="project" value="UniProtKB-UniRule"/>
</dbReference>
<dbReference type="HAMAP" id="MF_00340">
    <property type="entry name" value="Ribosomal_bL32"/>
    <property type="match status" value="1"/>
</dbReference>
<dbReference type="InterPro" id="IPR002677">
    <property type="entry name" value="Ribosomal_bL32"/>
</dbReference>
<dbReference type="InterPro" id="IPR044958">
    <property type="entry name" value="Ribosomal_bL32_plant/cyanobact"/>
</dbReference>
<dbReference type="InterPro" id="IPR011332">
    <property type="entry name" value="Ribosomal_zn-bd"/>
</dbReference>
<dbReference type="PANTHER" id="PTHR36083">
    <property type="entry name" value="50S RIBOSOMAL PROTEIN L32, CHLOROPLASTIC"/>
    <property type="match status" value="1"/>
</dbReference>
<dbReference type="PANTHER" id="PTHR36083:SF1">
    <property type="entry name" value="LARGE RIBOSOMAL SUBUNIT PROTEIN BL32C"/>
    <property type="match status" value="1"/>
</dbReference>
<dbReference type="Pfam" id="PF01783">
    <property type="entry name" value="Ribosomal_L32p"/>
    <property type="match status" value="1"/>
</dbReference>
<dbReference type="SUPFAM" id="SSF57829">
    <property type="entry name" value="Zn-binding ribosomal proteins"/>
    <property type="match status" value="1"/>
</dbReference>
<organism>
    <name type="scientific">Phaeodactylum tricornutum (strain CCAP 1055/1)</name>
    <dbReference type="NCBI Taxonomy" id="556484"/>
    <lineage>
        <taxon>Eukaryota</taxon>
        <taxon>Sar</taxon>
        <taxon>Stramenopiles</taxon>
        <taxon>Ochrophyta</taxon>
        <taxon>Bacillariophyta</taxon>
        <taxon>Bacillariophyceae</taxon>
        <taxon>Bacillariophycidae</taxon>
        <taxon>Naviculales</taxon>
        <taxon>Phaeodactylaceae</taxon>
        <taxon>Phaeodactylum</taxon>
    </lineage>
</organism>
<proteinExistence type="inferred from homology"/>
<reference key="1">
    <citation type="journal article" date="2007" name="Mol. Genet. Genomics">
        <title>Chloroplast genomes of the diatoms Phaeodactylum tricornutum and Thalassiosira pseudonana: comparison with other plastid genomes of the red lineage.</title>
        <authorList>
            <person name="Oudot-Le Secq M.-P."/>
            <person name="Grimwood J."/>
            <person name="Shapiro H."/>
            <person name="Armbrust E.V."/>
            <person name="Bowler C."/>
            <person name="Green B.R."/>
        </authorList>
    </citation>
    <scope>NUCLEOTIDE SEQUENCE [LARGE SCALE GENOMIC DNA]</scope>
    <source>
        <strain>CCAP 1055/1</strain>
    </source>
</reference>
<gene>
    <name evidence="1" type="primary">rpl32</name>
</gene>
<name>RK32_PHATC</name>
<keyword id="KW-0150">Chloroplast</keyword>
<keyword id="KW-0934">Plastid</keyword>
<keyword id="KW-1185">Reference proteome</keyword>
<keyword id="KW-0687">Ribonucleoprotein</keyword>
<keyword id="KW-0689">Ribosomal protein</keyword>
<evidence type="ECO:0000255" key="1">
    <source>
        <dbReference type="HAMAP-Rule" id="MF_00340"/>
    </source>
</evidence>
<evidence type="ECO:0000256" key="2">
    <source>
        <dbReference type="SAM" id="MobiDB-lite"/>
    </source>
</evidence>
<evidence type="ECO:0000305" key="3"/>
<comment type="subcellular location">
    <subcellularLocation>
        <location>Plastid</location>
        <location>Chloroplast</location>
    </subcellularLocation>
</comment>
<comment type="similarity">
    <text evidence="1">Belongs to the bacterial ribosomal protein bL32 family.</text>
</comment>
<feature type="chain" id="PRO_0000276492" description="Large ribosomal subunit protein bL32c">
    <location>
        <begin position="1"/>
        <end position="55"/>
    </location>
</feature>
<feature type="region of interest" description="Disordered" evidence="2">
    <location>
        <begin position="1"/>
        <end position="24"/>
    </location>
</feature>